<comment type="function">
    <text evidence="1">Acts as a tetrameric transcription processivity factor that binds in a competitive manner to RNA and the phosphoprotein (P) to prevent premature termination during transcription. Transcription anti-terminator that enhances readthrough of intergenic junctions during viral transcription. Preferentially binds to poly(A)-rich sequences. Plays a role in the association of the matrix protein with the nucleocapsid, which initiates assembly and budding. Also, can activate host NF-kappa-B through association with host RELA.</text>
</comment>
<comment type="subunit">
    <text evidence="1">Homotetramer. The homotetramer interacts with RNA. Interacts with the phosphoprotein (P); this interaction is required for protein M2-1 function, localization in host inclusion bodies. Formation of a complex host PP1/M2-1/P allows P to target host PP1 phosphatase to the M2-1 substrate. Interacts with the nucleoprotein (N). Interacts with the matrix protein (M); this interaction directs M localization to cytoplasmic inclusions comprising viral proteins L, N, P, and M2-1 and mediates M association with the nucleocapsid. Interacts with host RELA. Interacts with host PABPC1 (via C-terminus).</text>
</comment>
<comment type="subcellular location">
    <subcellularLocation>
        <location evidence="1">Virion</location>
    </subcellularLocation>
    <subcellularLocation>
        <location evidence="1">Host cytoplasm</location>
    </subcellularLocation>
    <subcellularLocation>
        <location evidence="1">Host nucleus</location>
    </subcellularLocation>
    <text evidence="1">Localizes in cytoplasmic inclusion bodies substructures called inclusion bodies associated granules (IBAGs). Forms a layer between the matrix and nucleocapsid.</text>
</comment>
<comment type="domain">
    <text evidence="1">Contains a zinc-finger domain on its N-terminus essential for its anti-termination function. Contains an oligomerization domain. The central globular core is responsible for binding to RNA and phosphoprotein.</text>
</comment>
<comment type="PTM">
    <text evidence="1">Phosphorylated by host in infected cells. Only dephosphorylated M2-1 is competent for viral mRNA binding. Cyclic turnover of phosphorylation-dephosphorylation of M2-1 is required for efficient viral transcription.</text>
</comment>
<comment type="similarity">
    <text evidence="3">Belongs to the pneumoviridae M2-1 protein family.</text>
</comment>
<proteinExistence type="evidence at protein level"/>
<reference key="1">
    <citation type="journal article" date="2005" name="J. Virol.">
        <title>Respiratory syncytial virus nonstructural proteins NS1 and NS2 mediate inhibition of Stat2 expression and alpha/beta interferon responsiveness.</title>
        <authorList>
            <person name="Lo M.S."/>
            <person name="Brazas R.M."/>
            <person name="Holtzman M.J."/>
        </authorList>
    </citation>
    <scope>NUCLEOTIDE SEQUENCE [LARGE SCALE GENOMIC DNA]</scope>
    <source>
        <strain>ATCC VR-26</strain>
    </source>
</reference>
<reference key="2">
    <citation type="submission" date="2014-04" db="EMBL/GenBank/DDBJ databases">
        <authorList>
            <person name="Das S.R."/>
            <person name="Halpin R.A."/>
            <person name="Puri V."/>
            <person name="Akopov A."/>
            <person name="Fedorova N."/>
            <person name="Tsitrin T."/>
            <person name="Stockwell T."/>
            <person name="Amedeo P."/>
            <person name="Bishop B."/>
            <person name="Gupta N."/>
            <person name="Hoover J."/>
            <person name="Katzel D."/>
            <person name="Schobel S."/>
            <person name="Shrivastava S."/>
            <person name="Wentworth D.E."/>
            <person name="Caserta M."/>
        </authorList>
    </citation>
    <scope>NUCLEOTIDE SEQUENCE [LARGE SCALE GENOMIC DNA]</scope>
</reference>
<reference key="3">
    <citation type="journal article" date="2018" name="Acta Crystallogr. F Struct. Biol. Commun.">
        <title>RNA-binding core domain reveals a compact and cooperative folding unit.</title>
        <authorList>
            <person name="Molina I.G."/>
            <person name="Josts I."/>
            <person name="Almeida Hernandez Y."/>
            <person name="Esperante S."/>
            <person name="Salgueiro M."/>
            <person name="Garcia Alai M.M."/>
            <person name="de Prat-Gay G."/>
            <person name="Tidow H."/>
        </authorList>
    </citation>
    <scope>X-RAY CRYSTALLOGRAPHY (2.00 ANGSTROMS) OF 73-185</scope>
</reference>
<reference key="4">
    <citation type="journal article" date="2019" name="Sci. Rep.">
        <title>The Interactome analysis of the Respiratory Syncytial Virus protein M2-1 suggests a new role in viral mRNA metabolism post-transcription.</title>
        <authorList>
            <person name="Bouillier C."/>
            <person name="Cosentino G."/>
            <person name="Leger T."/>
            <person name="Rincheval V."/>
            <person name="Richard C.A."/>
            <person name="Desquesnes A."/>
            <person name="Sitterlin D."/>
            <person name="Blouquit-Laye S."/>
            <person name="Eleouet J.F."/>
            <person name="Gault E."/>
            <person name="Rameix-Welti M.A."/>
        </authorList>
    </citation>
    <scope>NUCLEOTIDE SEQUENCE [GENOMIC RNA]</scope>
</reference>
<reference key="5">
    <citation type="journal article" date="2021" name="Nature">
        <title>A condensate-hardening drug blocks RSV replication in vivo.</title>
        <authorList>
            <person name="Risso-Ballester J."/>
            <person name="Galloux M."/>
            <person name="Cao J."/>
            <person name="Le Goffic R."/>
            <person name="Hontonnou F."/>
            <person name="Jobart-Malfait A."/>
            <person name="Desquesnes A."/>
            <person name="Sake S.M."/>
            <person name="Haid S."/>
            <person name="Du M."/>
            <person name="Zhang X."/>
            <person name="Zhang H."/>
            <person name="Wang Z."/>
            <person name="Rincheval V."/>
            <person name="Zhang Y."/>
            <person name="Pietschmann T."/>
            <person name="Eleouet J.F."/>
            <person name="Rameix-Welti M.A."/>
            <person name="Altmeyer R."/>
        </authorList>
    </citation>
    <scope>NUCLEOTIDE SEQUENCE [GENOMIC RNA]</scope>
    <source>
        <strain>Recombinant hRSV-P-BFP</strain>
    </source>
</reference>
<organism>
    <name type="scientific">Human respiratory syncytial virus</name>
    <dbReference type="NCBI Taxonomy" id="11250"/>
    <lineage>
        <taxon>Viruses</taxon>
        <taxon>Riboviria</taxon>
        <taxon>Orthornavirae</taxon>
        <taxon>Negarnaviricota</taxon>
        <taxon>Haploviricotina</taxon>
        <taxon>Monjiviricetes</taxon>
        <taxon>Mononegavirales</taxon>
        <taxon>Pneumoviridae</taxon>
        <taxon>Orthopneumovirus</taxon>
        <taxon>Orthopneumovirus hominis</taxon>
    </lineage>
</organism>
<accession>Q4KRW3</accession>
<keyword id="KW-0002">3D-structure</keyword>
<keyword id="KW-1074">Activation of host NF-kappa-B by virus</keyword>
<keyword id="KW-0251">Elongation factor</keyword>
<keyword id="KW-1035">Host cytoplasm</keyword>
<keyword id="KW-1048">Host nucleus</keyword>
<keyword id="KW-0945">Host-virus interaction</keyword>
<keyword id="KW-0479">Metal-binding</keyword>
<keyword id="KW-0597">Phosphoprotein</keyword>
<keyword id="KW-0648">Protein biosynthesis</keyword>
<keyword id="KW-0694">RNA-binding</keyword>
<keyword id="KW-0804">Transcription</keyword>
<keyword id="KW-0889">Transcription antitermination</keyword>
<keyword id="KW-0805">Transcription regulation</keyword>
<keyword id="KW-0468">Viral matrix protein</keyword>
<keyword id="KW-1195">Viral transcription</keyword>
<keyword id="KW-0946">Virion</keyword>
<keyword id="KW-0862">Zinc</keyword>
<keyword id="KW-0863">Zinc-finger</keyword>
<dbReference type="EMBL" id="AY911262">
    <property type="protein sequence ID" value="AAX23995.1"/>
    <property type="molecule type" value="Genomic_RNA"/>
</dbReference>
<dbReference type="EMBL" id="KF713490">
    <property type="protein sequence ID" value="AHC94764.1"/>
    <property type="molecule type" value="Viral_cRNA"/>
</dbReference>
<dbReference type="EMBL" id="KF713491">
    <property type="protein sequence ID" value="AHC94776.1"/>
    <property type="molecule type" value="Viral_cRNA"/>
</dbReference>
<dbReference type="EMBL" id="KF713492">
    <property type="protein sequence ID" value="AHC94788.1"/>
    <property type="molecule type" value="Viral_cRNA"/>
</dbReference>
<dbReference type="EMBL" id="KJ723461">
    <property type="protein sequence ID" value="AHY21144.1"/>
    <property type="molecule type" value="Viral_cRNA"/>
</dbReference>
<dbReference type="EMBL" id="KJ723467">
    <property type="protein sequence ID" value="AHY21212.1"/>
    <property type="molecule type" value="Viral_cRNA"/>
</dbReference>
<dbReference type="EMBL" id="KJ723474">
    <property type="protein sequence ID" value="AHY21277.1"/>
    <property type="molecule type" value="Viral_cRNA"/>
</dbReference>
<dbReference type="EMBL" id="KJ723475">
    <property type="protein sequence ID" value="AHY21288.1"/>
    <property type="molecule type" value="Viral_cRNA"/>
</dbReference>
<dbReference type="EMBL" id="KJ723478">
    <property type="protein sequence ID" value="AHY21321.1"/>
    <property type="molecule type" value="Viral_cRNA"/>
</dbReference>
<dbReference type="EMBL" id="KJ723491">
    <property type="protein sequence ID" value="AHY21453.1"/>
    <property type="molecule type" value="Viral_cRNA"/>
</dbReference>
<dbReference type="EMBL" id="KP258695">
    <property type="protein sequence ID" value="AIZ95498.1"/>
    <property type="molecule type" value="Viral_cRNA"/>
</dbReference>
<dbReference type="EMBL" id="KP258717">
    <property type="protein sequence ID" value="AIZ95718.1"/>
    <property type="molecule type" value="Viral_cRNA"/>
</dbReference>
<dbReference type="EMBL" id="KP258719">
    <property type="protein sequence ID" value="AIZ95740.1"/>
    <property type="molecule type" value="Viral_cRNA"/>
</dbReference>
<dbReference type="EMBL" id="KP258729">
    <property type="protein sequence ID" value="AIZ95850.1"/>
    <property type="molecule type" value="Viral_cRNA"/>
</dbReference>
<dbReference type="EMBL" id="KP258730">
    <property type="protein sequence ID" value="AIZ95861.1"/>
    <property type="molecule type" value="Viral_cRNA"/>
</dbReference>
<dbReference type="EMBL" id="KP258741">
    <property type="protein sequence ID" value="AIZ95982.1"/>
    <property type="molecule type" value="Viral_cRNA"/>
</dbReference>
<dbReference type="EMBL" id="KP258744">
    <property type="protein sequence ID" value="AIZ96015.1"/>
    <property type="molecule type" value="Viral_cRNA"/>
</dbReference>
<dbReference type="EMBL" id="KU316099">
    <property type="protein sequence ID" value="AMA66438.1"/>
    <property type="molecule type" value="Viral_cRNA"/>
</dbReference>
<dbReference type="EMBL" id="KU316103">
    <property type="protein sequence ID" value="AMA66482.1"/>
    <property type="molecule type" value="Viral_cRNA"/>
</dbReference>
<dbReference type="EMBL" id="KU316106">
    <property type="protein sequence ID" value="AMA66515.1"/>
    <property type="molecule type" value="Viral_cRNA"/>
</dbReference>
<dbReference type="EMBL" id="KU316107">
    <property type="protein sequence ID" value="AMA66526.1"/>
    <property type="molecule type" value="Viral_cRNA"/>
</dbReference>
<dbReference type="EMBL" id="KU316109">
    <property type="protein sequence ID" value="AMA66548.1"/>
    <property type="molecule type" value="Viral_cRNA"/>
</dbReference>
<dbReference type="EMBL" id="KU316119">
    <property type="protein sequence ID" value="AMA66658.1"/>
    <property type="molecule type" value="Viral_cRNA"/>
</dbReference>
<dbReference type="EMBL" id="KU316120">
    <property type="protein sequence ID" value="AMA66669.1"/>
    <property type="molecule type" value="Viral_cRNA"/>
</dbReference>
<dbReference type="EMBL" id="KU316123">
    <property type="protein sequence ID" value="AMA66702.1"/>
    <property type="molecule type" value="Viral_cRNA"/>
</dbReference>
<dbReference type="EMBL" id="KU316124">
    <property type="protein sequence ID" value="AMA66713.1"/>
    <property type="molecule type" value="Viral_cRNA"/>
</dbReference>
<dbReference type="EMBL" id="KU316140">
    <property type="protein sequence ID" value="AMA66889.1"/>
    <property type="molecule type" value="Viral_cRNA"/>
</dbReference>
<dbReference type="EMBL" id="KU316146">
    <property type="protein sequence ID" value="AMA66955.1"/>
    <property type="molecule type" value="Viral_cRNA"/>
</dbReference>
<dbReference type="EMBL" id="KU316152">
    <property type="protein sequence ID" value="AMA67021.1"/>
    <property type="molecule type" value="Viral_cRNA"/>
</dbReference>
<dbReference type="EMBL" id="KU316153">
    <property type="protein sequence ID" value="AMA67032.1"/>
    <property type="molecule type" value="Viral_cRNA"/>
</dbReference>
<dbReference type="EMBL" id="KU316154">
    <property type="protein sequence ID" value="AMA67043.1"/>
    <property type="molecule type" value="Viral_cRNA"/>
</dbReference>
<dbReference type="EMBL" id="KU316155">
    <property type="protein sequence ID" value="AMA67054.1"/>
    <property type="molecule type" value="Viral_cRNA"/>
</dbReference>
<dbReference type="EMBL" id="KU316160">
    <property type="protein sequence ID" value="AMA67109.1"/>
    <property type="molecule type" value="Viral_cRNA"/>
</dbReference>
<dbReference type="EMBL" id="KU316162">
    <property type="protein sequence ID" value="AMA67131.1"/>
    <property type="molecule type" value="Viral_cRNA"/>
</dbReference>
<dbReference type="EMBL" id="KU316164">
    <property type="protein sequence ID" value="AMA67153.1"/>
    <property type="molecule type" value="Viral_cRNA"/>
</dbReference>
<dbReference type="EMBL" id="KU316165">
    <property type="protein sequence ID" value="AMA67164.1"/>
    <property type="molecule type" value="Viral_cRNA"/>
</dbReference>
<dbReference type="EMBL" id="KU316168">
    <property type="protein sequence ID" value="AMA67197.1"/>
    <property type="molecule type" value="Viral_cRNA"/>
</dbReference>
<dbReference type="EMBL" id="KU316169">
    <property type="protein sequence ID" value="AMA67208.1"/>
    <property type="molecule type" value="Viral_cRNA"/>
</dbReference>
<dbReference type="EMBL" id="KU316171">
    <property type="protein sequence ID" value="AMA67230.1"/>
    <property type="molecule type" value="Viral_cRNA"/>
</dbReference>
<dbReference type="EMBL" id="KU316174">
    <property type="protein sequence ID" value="AMA67263.1"/>
    <property type="molecule type" value="Viral_cRNA"/>
</dbReference>
<dbReference type="EMBL" id="KU707921">
    <property type="protein sequence ID" value="AMQ35402.1"/>
    <property type="molecule type" value="Genomic_RNA"/>
</dbReference>
<dbReference type="EMBL" id="KX348546">
    <property type="protein sequence ID" value="API65190.1"/>
    <property type="molecule type" value="Genomic_RNA"/>
</dbReference>
<dbReference type="EMBL" id="MK810782">
    <property type="protein sequence ID" value="QFX69113.1"/>
    <property type="molecule type" value="Genomic_RNA"/>
</dbReference>
<dbReference type="EMBL" id="MK816924">
    <property type="protein sequence ID" value="QFX69125.1"/>
    <property type="molecule type" value="Genomic_RNA"/>
</dbReference>
<dbReference type="EMBL" id="MT994243">
    <property type="protein sequence ID" value="QXO84953.1"/>
    <property type="molecule type" value="Genomic_RNA"/>
</dbReference>
<dbReference type="PDB" id="5NKX">
    <property type="method" value="X-ray"/>
    <property type="resolution" value="2.00 A"/>
    <property type="chains" value="A/B=73-185"/>
</dbReference>
<dbReference type="PDBsum" id="5NKX"/>
<dbReference type="SASBDB" id="Q4KRW3"/>
<dbReference type="SMR" id="Q4KRW3"/>
<dbReference type="IntAct" id="Q4KRW3">
    <property type="interactions" value="1"/>
</dbReference>
<dbReference type="Proteomes" id="UP000095949">
    <property type="component" value="Genome"/>
</dbReference>
<dbReference type="Proteomes" id="UP000096784">
    <property type="component" value="Genome"/>
</dbReference>
<dbReference type="Proteomes" id="UP000103294">
    <property type="component" value="Genome"/>
</dbReference>
<dbReference type="Proteomes" id="UP000104352">
    <property type="component" value="Genome"/>
</dbReference>
<dbReference type="Proteomes" id="UP000106168">
    <property type="component" value="Genome"/>
</dbReference>
<dbReference type="Proteomes" id="UP000107497">
    <property type="component" value="Genome"/>
</dbReference>
<dbReference type="Proteomes" id="UP000107744">
    <property type="component" value="Genome"/>
</dbReference>
<dbReference type="Proteomes" id="UP000108691">
    <property type="component" value="Genome"/>
</dbReference>
<dbReference type="Proteomes" id="UP000110532">
    <property type="component" value="Genome"/>
</dbReference>
<dbReference type="Proteomes" id="UP000112280">
    <property type="component" value="Genome"/>
</dbReference>
<dbReference type="Proteomes" id="UP000113202">
    <property type="component" value="Genome"/>
</dbReference>
<dbReference type="Proteomes" id="UP000119304">
    <property type="component" value="Genome"/>
</dbReference>
<dbReference type="Proteomes" id="UP000125194">
    <property type="component" value="Genome"/>
</dbReference>
<dbReference type="Proteomes" id="UP000129404">
    <property type="component" value="Genome"/>
</dbReference>
<dbReference type="Proteomes" id="UP000130292">
    <property type="component" value="Genome"/>
</dbReference>
<dbReference type="Proteomes" id="UP000130624">
    <property type="component" value="Genome"/>
</dbReference>
<dbReference type="Proteomes" id="UP000130886">
    <property type="component" value="Genome"/>
</dbReference>
<dbReference type="Proteomes" id="UP000131879">
    <property type="component" value="Genome"/>
</dbReference>
<dbReference type="Proteomes" id="UP000132523">
    <property type="component" value="Genome"/>
</dbReference>
<dbReference type="Proteomes" id="UP000137337">
    <property type="component" value="Genome"/>
</dbReference>
<dbReference type="Proteomes" id="UP000138546">
    <property type="component" value="Genome"/>
</dbReference>
<dbReference type="Proteomes" id="UP000138826">
    <property type="component" value="Genome"/>
</dbReference>
<dbReference type="Proteomes" id="UP000140753">
    <property type="component" value="Genome"/>
</dbReference>
<dbReference type="Proteomes" id="UP000143862">
    <property type="component" value="Genome"/>
</dbReference>
<dbReference type="Proteomes" id="UP000143940">
    <property type="component" value="Genome"/>
</dbReference>
<dbReference type="Proteomes" id="UP000145303">
    <property type="component" value="Genome"/>
</dbReference>
<dbReference type="Proteomes" id="UP000145641">
    <property type="component" value="Genome"/>
</dbReference>
<dbReference type="Proteomes" id="UP000151571">
    <property type="component" value="Genome"/>
</dbReference>
<dbReference type="Proteomes" id="UP000153528">
    <property type="component" value="Genome"/>
</dbReference>
<dbReference type="Proteomes" id="UP000153600">
    <property type="component" value="Genome"/>
</dbReference>
<dbReference type="Proteomes" id="UP000154981">
    <property type="component" value="Genome"/>
</dbReference>
<dbReference type="Proteomes" id="UP000158141">
    <property type="component" value="Genome"/>
</dbReference>
<dbReference type="Proteomes" id="UP000160724">
    <property type="component" value="Genome"/>
</dbReference>
<dbReference type="Proteomes" id="UP000161554">
    <property type="component" value="Genome"/>
</dbReference>
<dbReference type="Proteomes" id="UP000163705">
    <property type="component" value="Genome"/>
</dbReference>
<dbReference type="Proteomes" id="UP000165575">
    <property type="component" value="Genome"/>
</dbReference>
<dbReference type="Proteomes" id="UP000165962">
    <property type="component" value="Genome"/>
</dbReference>
<dbReference type="Proteomes" id="UP000168834">
    <property type="component" value="Genome"/>
</dbReference>
<dbReference type="Proteomes" id="UP000169852">
    <property type="component" value="Genome"/>
</dbReference>
<dbReference type="Proteomes" id="UP000170438">
    <property type="component" value="Genome"/>
</dbReference>
<dbReference type="Proteomes" id="UP000171008">
    <property type="component" value="Genome"/>
</dbReference>
<dbReference type="GO" id="GO:0030430">
    <property type="term" value="C:host cell cytoplasm"/>
    <property type="evidence" value="ECO:0007669"/>
    <property type="project" value="UniProtKB-SubCell"/>
</dbReference>
<dbReference type="GO" id="GO:0042025">
    <property type="term" value="C:host cell nucleus"/>
    <property type="evidence" value="ECO:0007669"/>
    <property type="project" value="UniProtKB-SubCell"/>
</dbReference>
<dbReference type="GO" id="GO:0044423">
    <property type="term" value="C:virion component"/>
    <property type="evidence" value="ECO:0007669"/>
    <property type="project" value="UniProtKB-KW"/>
</dbReference>
<dbReference type="GO" id="GO:0003723">
    <property type="term" value="F:RNA binding"/>
    <property type="evidence" value="ECO:0007669"/>
    <property type="project" value="UniProtKB-KW"/>
</dbReference>
<dbReference type="GO" id="GO:0039660">
    <property type="term" value="F:structural constituent of virion"/>
    <property type="evidence" value="ECO:0007669"/>
    <property type="project" value="UniProtKB-KW"/>
</dbReference>
<dbReference type="GO" id="GO:0008270">
    <property type="term" value="F:zinc ion binding"/>
    <property type="evidence" value="ECO:0007669"/>
    <property type="project" value="UniProtKB-KW"/>
</dbReference>
<dbReference type="GO" id="GO:0046782">
    <property type="term" value="P:regulation of viral transcription"/>
    <property type="evidence" value="ECO:0007669"/>
    <property type="project" value="InterPro"/>
</dbReference>
<dbReference type="GO" id="GO:0085033">
    <property type="term" value="P:symbiont-mediated activation of host NF-kappaB cascade"/>
    <property type="evidence" value="ECO:0007669"/>
    <property type="project" value="UniProtKB-KW"/>
</dbReference>
<dbReference type="GO" id="GO:0031564">
    <property type="term" value="P:transcription antitermination"/>
    <property type="evidence" value="ECO:0007669"/>
    <property type="project" value="UniProtKB-KW"/>
</dbReference>
<dbReference type="GO" id="GO:0019083">
    <property type="term" value="P:viral transcription"/>
    <property type="evidence" value="ECO:0007669"/>
    <property type="project" value="UniProtKB-KW"/>
</dbReference>
<dbReference type="FunFam" id="1.20.120.1350:FF:000001">
    <property type="entry name" value="Matrix M2-1"/>
    <property type="match status" value="1"/>
</dbReference>
<dbReference type="Gene3D" id="1.20.120.1350">
    <property type="entry name" value="Pneumovirus matrix protein 2 (M2), zinc-binding domain"/>
    <property type="match status" value="1"/>
</dbReference>
<dbReference type="InterPro" id="IPR009452">
    <property type="entry name" value="Pneumovirus_M2-1"/>
</dbReference>
<dbReference type="InterPro" id="IPR000571">
    <property type="entry name" value="Znf_CCCH"/>
</dbReference>
<dbReference type="InterPro" id="IPR036855">
    <property type="entry name" value="Znf_CCCH_sf"/>
</dbReference>
<dbReference type="Pfam" id="PF06436">
    <property type="entry name" value="Pneumovirus_M2"/>
    <property type="match status" value="1"/>
</dbReference>
<dbReference type="PIRSF" id="PIRSF003913">
    <property type="entry name" value="Matrix_glycop-M2_paramyxo"/>
    <property type="match status" value="1"/>
</dbReference>
<dbReference type="SMART" id="SM00356">
    <property type="entry name" value="ZnF_C3H1"/>
    <property type="match status" value="1"/>
</dbReference>
<dbReference type="SUPFAM" id="SSF90229">
    <property type="entry name" value="CCCH zinc finger"/>
    <property type="match status" value="1"/>
</dbReference>
<dbReference type="PROSITE" id="PS50103">
    <property type="entry name" value="ZF_C3H1"/>
    <property type="match status" value="1"/>
</dbReference>
<feature type="chain" id="PRO_0000458092" description="Protein M2-1">
    <location>
        <begin position="1"/>
        <end position="194"/>
    </location>
</feature>
<feature type="zinc finger region" description="C3H1-type" evidence="2">
    <location>
        <begin position="1"/>
        <end position="28"/>
    </location>
</feature>
<feature type="region of interest" description="Oligomerization" evidence="1">
    <location>
        <begin position="32"/>
        <end position="49"/>
    </location>
</feature>
<feature type="region of interest" description="Globular core" evidence="1">
    <location>
        <begin position="76"/>
        <end position="171"/>
    </location>
</feature>
<feature type="region of interest" description="Binding to the phosphoprotein" evidence="1">
    <location>
        <begin position="126"/>
        <end position="163"/>
    </location>
</feature>
<feature type="region of interest" description="Disordered" evidence="1">
    <location>
        <begin position="172"/>
        <end position="194"/>
    </location>
</feature>
<feature type="site" description="Involved in RNA-binding" evidence="1">
    <location>
        <position position="8"/>
    </location>
</feature>
<feature type="site" description="Involved in RNA-binding" evidence="1">
    <location>
        <position position="9"/>
    </location>
</feature>
<feature type="site" description="Involved in RNA-binding" evidence="1">
    <location>
        <position position="23"/>
    </location>
</feature>
<feature type="site" description="Involved in RNA-binding" evidence="1">
    <location>
        <position position="92"/>
    </location>
</feature>
<feature type="site" description="Involved in RNA-binding" evidence="1">
    <location>
        <position position="151"/>
    </location>
</feature>
<feature type="modified residue" description="Phosphoserine" evidence="1">
    <location>
        <position position="58"/>
    </location>
</feature>
<feature type="modified residue" description="Phosphoserine" evidence="1">
    <location>
        <position position="61"/>
    </location>
</feature>
<feature type="helix" evidence="4">
    <location>
        <begin position="76"/>
        <end position="85"/>
    </location>
</feature>
<feature type="helix" evidence="4">
    <location>
        <begin position="92"/>
        <end position="105"/>
    </location>
</feature>
<feature type="helix" evidence="4">
    <location>
        <begin position="108"/>
        <end position="117"/>
    </location>
</feature>
<feature type="helix" evidence="4">
    <location>
        <begin position="124"/>
        <end position="140"/>
    </location>
</feature>
<feature type="helix" evidence="4">
    <location>
        <begin position="142"/>
        <end position="151"/>
    </location>
</feature>
<feature type="helix" evidence="4">
    <location>
        <begin position="154"/>
        <end position="171"/>
    </location>
</feature>
<evidence type="ECO:0000250" key="1">
    <source>
        <dbReference type="UniProtKB" id="P04545"/>
    </source>
</evidence>
<evidence type="ECO:0000255" key="2">
    <source>
        <dbReference type="PROSITE-ProRule" id="PRU00723"/>
    </source>
</evidence>
<evidence type="ECO:0000305" key="3"/>
<evidence type="ECO:0007829" key="4">
    <source>
        <dbReference type="PDB" id="5NKX"/>
    </source>
</evidence>
<sequence>MSRRNPCKFEIRGHCLNGKRCHFSHNYFEWPPHALLVRQNFMLNRILKSMDKSIDTLSEISGAAELDRTEEYALGVVGVLESYIGSINNITKQSACVAMSKLLTELNSDDIKKLRDNEELNSPKIRVYNTVISYIESNRKNNKQTIHLLKRLPADVLKKTIKNTLDIHKSITINNPKELTVSDTNDHAKNNDTT</sequence>
<gene>
    <name type="primary">M2-1</name>
</gene>
<organismHost>
    <name type="scientific">Homo sapiens</name>
    <name type="common">Human</name>
    <dbReference type="NCBI Taxonomy" id="9606"/>
</organismHost>
<protein>
    <recommendedName>
        <fullName>Protein M2-1</fullName>
    </recommendedName>
    <alternativeName>
        <fullName>Envelope-associated 22 kDa protein</fullName>
    </alternativeName>
    <alternativeName>
        <fullName>Transcription antitermination factor M2-1</fullName>
    </alternativeName>
    <alternativeName>
        <fullName>Vp24</fullName>
    </alternativeName>
</protein>
<name>M21_HRSV</name>